<reference key="1">
    <citation type="journal article" date="2008" name="Mol. Phylogenet. Evol.">
        <title>Complete plastid genome sequence of the chickpea (Cicer arietinum) and the phylogenetic distribution of rps12 and clpP intron losses among legumes (Leguminosae).</title>
        <authorList>
            <person name="Jansen R.K."/>
            <person name="Wojciechowski M.F."/>
            <person name="Sanniyasi E."/>
            <person name="Lee S.-B."/>
            <person name="Daniell H."/>
        </authorList>
    </citation>
    <scope>NUCLEOTIDE SEQUENCE [LARGE SCALE GENOMIC DNA]</scope>
</reference>
<geneLocation type="chloroplast"/>
<organism>
    <name type="scientific">Cicer arietinum</name>
    <name type="common">Chickpea</name>
    <name type="synonym">Garbanzo</name>
    <dbReference type="NCBI Taxonomy" id="3827"/>
    <lineage>
        <taxon>Eukaryota</taxon>
        <taxon>Viridiplantae</taxon>
        <taxon>Streptophyta</taxon>
        <taxon>Embryophyta</taxon>
        <taxon>Tracheophyta</taxon>
        <taxon>Spermatophyta</taxon>
        <taxon>Magnoliopsida</taxon>
        <taxon>eudicotyledons</taxon>
        <taxon>Gunneridae</taxon>
        <taxon>Pentapetalae</taxon>
        <taxon>rosids</taxon>
        <taxon>fabids</taxon>
        <taxon>Fabales</taxon>
        <taxon>Fabaceae</taxon>
        <taxon>Papilionoideae</taxon>
        <taxon>50 kb inversion clade</taxon>
        <taxon>NPAAA clade</taxon>
        <taxon>Hologalegina</taxon>
        <taxon>IRL clade</taxon>
        <taxon>Cicereae</taxon>
        <taxon>Cicer</taxon>
    </lineage>
</organism>
<feature type="chain" id="PRO_0000359809" description="Photosystem II CP47 reaction center protein">
    <location>
        <begin position="1"/>
        <end position="509"/>
    </location>
</feature>
<feature type="transmembrane region" description="Helical" evidence="1">
    <location>
        <begin position="21"/>
        <end position="36"/>
    </location>
</feature>
<feature type="transmembrane region" description="Helical" evidence="1">
    <location>
        <begin position="101"/>
        <end position="115"/>
    </location>
</feature>
<feature type="transmembrane region" description="Helical" evidence="1">
    <location>
        <begin position="140"/>
        <end position="156"/>
    </location>
</feature>
<feature type="transmembrane region" description="Helical" evidence="1">
    <location>
        <begin position="203"/>
        <end position="218"/>
    </location>
</feature>
<feature type="transmembrane region" description="Helical" evidence="1">
    <location>
        <begin position="237"/>
        <end position="252"/>
    </location>
</feature>
<feature type="transmembrane region" description="Helical" evidence="1">
    <location>
        <begin position="457"/>
        <end position="472"/>
    </location>
</feature>
<accession>B5LMP9</accession>
<gene>
    <name evidence="1" type="primary">psbB</name>
</gene>
<comment type="function">
    <text evidence="1">One of the components of the core complex of photosystem II (PSII). It binds chlorophyll and helps catalyze the primary light-induced photochemical processes of PSII. PSII is a light-driven water:plastoquinone oxidoreductase, using light energy to abstract electrons from H(2)O, generating O(2) and a proton gradient subsequently used for ATP formation.</text>
</comment>
<comment type="cofactor">
    <text evidence="1">Binds multiple chlorophylls. PSII binds additional chlorophylls, carotenoids and specific lipids.</text>
</comment>
<comment type="subunit">
    <text evidence="1">PSII is composed of 1 copy each of membrane proteins PsbA, PsbB, PsbC, PsbD, PsbE, PsbF, PsbH, PsbI, PsbJ, PsbK, PsbL, PsbM, PsbT, PsbX, PsbY, PsbZ, Psb30/Ycf12, at least 3 peripheral proteins of the oxygen-evolving complex and a large number of cofactors. It forms dimeric complexes.</text>
</comment>
<comment type="subcellular location">
    <subcellularLocation>
        <location evidence="1">Plastid</location>
        <location evidence="1">Chloroplast thylakoid membrane</location>
        <topology evidence="1">Multi-pass membrane protein</topology>
    </subcellularLocation>
</comment>
<comment type="similarity">
    <text evidence="1">Belongs to the PsbB/PsbC family. PsbB subfamily.</text>
</comment>
<keyword id="KW-0148">Chlorophyll</keyword>
<keyword id="KW-0150">Chloroplast</keyword>
<keyword id="KW-0157">Chromophore</keyword>
<keyword id="KW-0472">Membrane</keyword>
<keyword id="KW-0602">Photosynthesis</keyword>
<keyword id="KW-0604">Photosystem II</keyword>
<keyword id="KW-0934">Plastid</keyword>
<keyword id="KW-1185">Reference proteome</keyword>
<keyword id="KW-0793">Thylakoid</keyword>
<keyword id="KW-0812">Transmembrane</keyword>
<keyword id="KW-1133">Transmembrane helix</keyword>
<sequence length="509" mass="56082">MGLPWYRVHTVVLNDPGRLLSVHIMHTALVAGWAGSMALYELAVFDPSDPVLDPMWRQGMFVIPFMTRLGITNSWGGWNITGGTITNPGIWSYEGVAGAHIVFSGLCFLAAIWHWVYWDLEIFCDERTGKPSLDLPKIFGIHLFLAGVGCFGFGAFHVTGLFGPGIWVSDPYGLTGRVQSVNPAWGVDGFDPFVPGGIASHHIAAGTLGILAGLFHLSVRPPQRLYKGLRMGNIETVLSSSIAAVFFAAFVVAGTMWYGSATTPIELFGPTRYQWDQGYFQQEIYRRVGAGLAENQSLSEAWSKIPEKLAFYDYIGNNPAKGGLFRAGSMDNGDGIAVGWLGHPIFRDKEGRELFVRRMPTFFETFPVVLVDGDGIVRADVPFRRAESKYSVEQVGVTVEFYGGELNGVSYSDPATVKKYARRAQLGEIFELDRATLKSDGVFRSSPRGWFTFGHVSFALLFFFGHIWHGARTLFRDVFAGIDPDLDAQVEFGAFQKLGDPSTKKPVVS</sequence>
<evidence type="ECO:0000255" key="1">
    <source>
        <dbReference type="HAMAP-Rule" id="MF_01495"/>
    </source>
</evidence>
<name>PSBB_CICAR</name>
<dbReference type="EMBL" id="EU835853">
    <property type="protein sequence ID" value="ACH41095.1"/>
    <property type="molecule type" value="Genomic_DNA"/>
</dbReference>
<dbReference type="RefSeq" id="YP_002149758.1">
    <property type="nucleotide sequence ID" value="NC_011163.1"/>
</dbReference>
<dbReference type="SMR" id="B5LMP9"/>
<dbReference type="PaxDb" id="3827-XP_004515190.1"/>
<dbReference type="GeneID" id="6797495"/>
<dbReference type="KEGG" id="cam:6797495"/>
<dbReference type="eggNOG" id="ENOG502QRV6">
    <property type="taxonomic scope" value="Eukaryota"/>
</dbReference>
<dbReference type="OrthoDB" id="1843540at2759"/>
<dbReference type="Proteomes" id="UP000087171">
    <property type="component" value="Chloroplast Pltd"/>
</dbReference>
<dbReference type="GO" id="GO:0009535">
    <property type="term" value="C:chloroplast thylakoid membrane"/>
    <property type="evidence" value="ECO:0007669"/>
    <property type="project" value="UniProtKB-SubCell"/>
</dbReference>
<dbReference type="GO" id="GO:0009523">
    <property type="term" value="C:photosystem II"/>
    <property type="evidence" value="ECO:0007669"/>
    <property type="project" value="UniProtKB-KW"/>
</dbReference>
<dbReference type="GO" id="GO:0016168">
    <property type="term" value="F:chlorophyll binding"/>
    <property type="evidence" value="ECO:0007669"/>
    <property type="project" value="UniProtKB-UniRule"/>
</dbReference>
<dbReference type="GO" id="GO:0045156">
    <property type="term" value="F:electron transporter, transferring electrons within the cyclic electron transport pathway of photosynthesis activity"/>
    <property type="evidence" value="ECO:0007669"/>
    <property type="project" value="InterPro"/>
</dbReference>
<dbReference type="GO" id="GO:0009772">
    <property type="term" value="P:photosynthetic electron transport in photosystem II"/>
    <property type="evidence" value="ECO:0007669"/>
    <property type="project" value="InterPro"/>
</dbReference>
<dbReference type="FunFam" id="3.10.680.10:FF:000001">
    <property type="entry name" value="Photosystem II CP47 reaction center protein"/>
    <property type="match status" value="1"/>
</dbReference>
<dbReference type="Gene3D" id="3.10.680.10">
    <property type="entry name" value="Photosystem II CP47 reaction center protein"/>
    <property type="match status" value="1"/>
</dbReference>
<dbReference type="HAMAP" id="MF_01495">
    <property type="entry name" value="PSII_PsbB_CP47"/>
    <property type="match status" value="1"/>
</dbReference>
<dbReference type="InterPro" id="IPR000932">
    <property type="entry name" value="PS_antenna-like"/>
</dbReference>
<dbReference type="InterPro" id="IPR036001">
    <property type="entry name" value="PS_II_antenna-like_sf"/>
</dbReference>
<dbReference type="InterPro" id="IPR017486">
    <property type="entry name" value="PSII_PsbB"/>
</dbReference>
<dbReference type="NCBIfam" id="TIGR03039">
    <property type="entry name" value="PS_II_CP47"/>
    <property type="match status" value="1"/>
</dbReference>
<dbReference type="PANTHER" id="PTHR33180">
    <property type="entry name" value="PHOTOSYSTEM II CP43 REACTION CENTER PROTEIN"/>
    <property type="match status" value="1"/>
</dbReference>
<dbReference type="PANTHER" id="PTHR33180:SF38">
    <property type="entry name" value="PHOTOSYSTEM II CP47 REACTION CENTER PROTEIN"/>
    <property type="match status" value="1"/>
</dbReference>
<dbReference type="Pfam" id="PF00421">
    <property type="entry name" value="PSII"/>
    <property type="match status" value="1"/>
</dbReference>
<dbReference type="SUPFAM" id="SSF161077">
    <property type="entry name" value="Photosystem II antenna protein-like"/>
    <property type="match status" value="1"/>
</dbReference>
<proteinExistence type="inferred from homology"/>
<protein>
    <recommendedName>
        <fullName evidence="1">Photosystem II CP47 reaction center protein</fullName>
    </recommendedName>
    <alternativeName>
        <fullName evidence="1">PSII 47 kDa protein</fullName>
    </alternativeName>
    <alternativeName>
        <fullName evidence="1">Protein CP-47</fullName>
    </alternativeName>
</protein>